<gene>
    <name evidence="1" type="primary">ruvA</name>
    <name type="ordered locus">mma_0310</name>
</gene>
<protein>
    <recommendedName>
        <fullName evidence="1">Holliday junction branch migration complex subunit RuvA</fullName>
    </recommendedName>
</protein>
<keyword id="KW-0963">Cytoplasm</keyword>
<keyword id="KW-0227">DNA damage</keyword>
<keyword id="KW-0233">DNA recombination</keyword>
<keyword id="KW-0234">DNA repair</keyword>
<keyword id="KW-0238">DNA-binding</keyword>
<comment type="function">
    <text evidence="1">The RuvA-RuvB-RuvC complex processes Holliday junction (HJ) DNA during genetic recombination and DNA repair, while the RuvA-RuvB complex plays an important role in the rescue of blocked DNA replication forks via replication fork reversal (RFR). RuvA specifically binds to HJ cruciform DNA, conferring on it an open structure. The RuvB hexamer acts as an ATP-dependent pump, pulling dsDNA into and through the RuvAB complex. HJ branch migration allows RuvC to scan DNA until it finds its consensus sequence, where it cleaves and resolves the cruciform DNA.</text>
</comment>
<comment type="subunit">
    <text evidence="1">Homotetramer. Forms an RuvA(8)-RuvB(12)-Holliday junction (HJ) complex. HJ DNA is sandwiched between 2 RuvA tetramers; dsDNA enters through RuvA and exits via RuvB. An RuvB hexamer assembles on each DNA strand where it exits the tetramer. Each RuvB hexamer is contacted by two RuvA subunits (via domain III) on 2 adjacent RuvB subunits; this complex drives branch migration. In the full resolvosome a probable DNA-RuvA(4)-RuvB(12)-RuvC(2) complex forms which resolves the HJ.</text>
</comment>
<comment type="subcellular location">
    <subcellularLocation>
        <location evidence="1">Cytoplasm</location>
    </subcellularLocation>
</comment>
<comment type="domain">
    <text evidence="1">Has three domains with a flexible linker between the domains II and III and assumes an 'L' shape. Domain III is highly mobile and contacts RuvB.</text>
</comment>
<comment type="similarity">
    <text evidence="1">Belongs to the RuvA family.</text>
</comment>
<evidence type="ECO:0000255" key="1">
    <source>
        <dbReference type="HAMAP-Rule" id="MF_00031"/>
    </source>
</evidence>
<organism>
    <name type="scientific">Janthinobacterium sp. (strain Marseille)</name>
    <name type="common">Minibacterium massiliensis</name>
    <dbReference type="NCBI Taxonomy" id="375286"/>
    <lineage>
        <taxon>Bacteria</taxon>
        <taxon>Pseudomonadati</taxon>
        <taxon>Pseudomonadota</taxon>
        <taxon>Betaproteobacteria</taxon>
        <taxon>Burkholderiales</taxon>
        <taxon>Oxalobacteraceae</taxon>
        <taxon>Janthinobacterium</taxon>
    </lineage>
</organism>
<feature type="chain" id="PRO_1000002464" description="Holliday junction branch migration complex subunit RuvA">
    <location>
        <begin position="1"/>
        <end position="191"/>
    </location>
</feature>
<feature type="region of interest" description="Domain I" evidence="1">
    <location>
        <begin position="1"/>
        <end position="64"/>
    </location>
</feature>
<feature type="region of interest" description="Domain II" evidence="1">
    <location>
        <begin position="65"/>
        <end position="137"/>
    </location>
</feature>
<feature type="region of interest" description="Flexible linker" evidence="1">
    <location>
        <begin position="137"/>
        <end position="141"/>
    </location>
</feature>
<feature type="region of interest" description="Domain III" evidence="1">
    <location>
        <begin position="142"/>
        <end position="191"/>
    </location>
</feature>
<name>RUVA_JANMA</name>
<accession>A6SUQ3</accession>
<sequence>MIGRLSGVLLEKNPPQLLVDCNGVGYEVNVPMSTFYNLPGLGDKVVLLTHLTVREDAHILFGFGTNEERNVFKQLVKITGIGARTALSILSGMSVADLAQAITMQEAGRLTKIPGIGKKTAERLLLELKGKLGADLGVAGAVATDATSDILNALLALGYSDKEAMLALKQVPAGTGVSDGIKLALKSLSKA</sequence>
<dbReference type="EMBL" id="CP000269">
    <property type="protein sequence ID" value="ABR88748.1"/>
    <property type="molecule type" value="Genomic_DNA"/>
</dbReference>
<dbReference type="RefSeq" id="WP_012078175.1">
    <property type="nucleotide sequence ID" value="NC_009659.1"/>
</dbReference>
<dbReference type="SMR" id="A6SUQ3"/>
<dbReference type="STRING" id="375286.mma_0310"/>
<dbReference type="KEGG" id="mms:mma_0310"/>
<dbReference type="eggNOG" id="COG0632">
    <property type="taxonomic scope" value="Bacteria"/>
</dbReference>
<dbReference type="HOGENOM" id="CLU_087936_0_0_4"/>
<dbReference type="OrthoDB" id="5293449at2"/>
<dbReference type="Proteomes" id="UP000006388">
    <property type="component" value="Chromosome"/>
</dbReference>
<dbReference type="GO" id="GO:0005737">
    <property type="term" value="C:cytoplasm"/>
    <property type="evidence" value="ECO:0007669"/>
    <property type="project" value="UniProtKB-SubCell"/>
</dbReference>
<dbReference type="GO" id="GO:0009379">
    <property type="term" value="C:Holliday junction helicase complex"/>
    <property type="evidence" value="ECO:0007669"/>
    <property type="project" value="InterPro"/>
</dbReference>
<dbReference type="GO" id="GO:0048476">
    <property type="term" value="C:Holliday junction resolvase complex"/>
    <property type="evidence" value="ECO:0007669"/>
    <property type="project" value="UniProtKB-UniRule"/>
</dbReference>
<dbReference type="GO" id="GO:0005524">
    <property type="term" value="F:ATP binding"/>
    <property type="evidence" value="ECO:0007669"/>
    <property type="project" value="InterPro"/>
</dbReference>
<dbReference type="GO" id="GO:0000400">
    <property type="term" value="F:four-way junction DNA binding"/>
    <property type="evidence" value="ECO:0007669"/>
    <property type="project" value="UniProtKB-UniRule"/>
</dbReference>
<dbReference type="GO" id="GO:0009378">
    <property type="term" value="F:four-way junction helicase activity"/>
    <property type="evidence" value="ECO:0007669"/>
    <property type="project" value="InterPro"/>
</dbReference>
<dbReference type="GO" id="GO:0006310">
    <property type="term" value="P:DNA recombination"/>
    <property type="evidence" value="ECO:0007669"/>
    <property type="project" value="UniProtKB-UniRule"/>
</dbReference>
<dbReference type="GO" id="GO:0006281">
    <property type="term" value="P:DNA repair"/>
    <property type="evidence" value="ECO:0007669"/>
    <property type="project" value="UniProtKB-UniRule"/>
</dbReference>
<dbReference type="CDD" id="cd14332">
    <property type="entry name" value="UBA_RuvA_C"/>
    <property type="match status" value="1"/>
</dbReference>
<dbReference type="Gene3D" id="1.10.150.20">
    <property type="entry name" value="5' to 3' exonuclease, C-terminal subdomain"/>
    <property type="match status" value="1"/>
</dbReference>
<dbReference type="Gene3D" id="1.10.8.10">
    <property type="entry name" value="DNA helicase RuvA subunit, C-terminal domain"/>
    <property type="match status" value="1"/>
</dbReference>
<dbReference type="Gene3D" id="2.40.50.140">
    <property type="entry name" value="Nucleic acid-binding proteins"/>
    <property type="match status" value="1"/>
</dbReference>
<dbReference type="HAMAP" id="MF_00031">
    <property type="entry name" value="DNA_HJ_migration_RuvA"/>
    <property type="match status" value="1"/>
</dbReference>
<dbReference type="InterPro" id="IPR013849">
    <property type="entry name" value="DNA_helicase_Holl-junc_RuvA_I"/>
</dbReference>
<dbReference type="InterPro" id="IPR003583">
    <property type="entry name" value="Hlx-hairpin-Hlx_DNA-bd_motif"/>
</dbReference>
<dbReference type="InterPro" id="IPR012340">
    <property type="entry name" value="NA-bd_OB-fold"/>
</dbReference>
<dbReference type="InterPro" id="IPR000085">
    <property type="entry name" value="RuvA"/>
</dbReference>
<dbReference type="InterPro" id="IPR010994">
    <property type="entry name" value="RuvA_2-like"/>
</dbReference>
<dbReference type="InterPro" id="IPR011114">
    <property type="entry name" value="RuvA_C"/>
</dbReference>
<dbReference type="InterPro" id="IPR036267">
    <property type="entry name" value="RuvA_C_sf"/>
</dbReference>
<dbReference type="NCBIfam" id="TIGR00084">
    <property type="entry name" value="ruvA"/>
    <property type="match status" value="1"/>
</dbReference>
<dbReference type="Pfam" id="PF14520">
    <property type="entry name" value="HHH_5"/>
    <property type="match status" value="1"/>
</dbReference>
<dbReference type="Pfam" id="PF07499">
    <property type="entry name" value="RuvA_C"/>
    <property type="match status" value="1"/>
</dbReference>
<dbReference type="Pfam" id="PF01330">
    <property type="entry name" value="RuvA_N"/>
    <property type="match status" value="1"/>
</dbReference>
<dbReference type="SMART" id="SM00278">
    <property type="entry name" value="HhH1"/>
    <property type="match status" value="2"/>
</dbReference>
<dbReference type="SUPFAM" id="SSF46929">
    <property type="entry name" value="DNA helicase RuvA subunit, C-terminal domain"/>
    <property type="match status" value="1"/>
</dbReference>
<dbReference type="SUPFAM" id="SSF50249">
    <property type="entry name" value="Nucleic acid-binding proteins"/>
    <property type="match status" value="1"/>
</dbReference>
<dbReference type="SUPFAM" id="SSF47781">
    <property type="entry name" value="RuvA domain 2-like"/>
    <property type="match status" value="1"/>
</dbReference>
<proteinExistence type="inferred from homology"/>
<reference key="1">
    <citation type="journal article" date="2007" name="PLoS Genet.">
        <title>Genome analysis of Minibacterium massiliensis highlights the convergent evolution of water-living bacteria.</title>
        <authorList>
            <person name="Audic S."/>
            <person name="Robert C."/>
            <person name="Campagna B."/>
            <person name="Parinello H."/>
            <person name="Claverie J.-M."/>
            <person name="Raoult D."/>
            <person name="Drancourt M."/>
        </authorList>
    </citation>
    <scope>NUCLEOTIDE SEQUENCE [LARGE SCALE GENOMIC DNA]</scope>
    <source>
        <strain>Marseille</strain>
    </source>
</reference>